<proteinExistence type="inferred from homology"/>
<keyword id="KW-0067">ATP-binding</keyword>
<keyword id="KW-0963">Cytoplasm</keyword>
<keyword id="KW-0418">Kinase</keyword>
<keyword id="KW-0460">Magnesium</keyword>
<keyword id="KW-0479">Metal-binding</keyword>
<keyword id="KW-0546">Nucleotide metabolism</keyword>
<keyword id="KW-0547">Nucleotide-binding</keyword>
<keyword id="KW-0597">Phosphoprotein</keyword>
<keyword id="KW-1185">Reference proteome</keyword>
<keyword id="KW-0808">Transferase</keyword>
<comment type="function">
    <text evidence="1">Major role in the synthesis of nucleoside triphosphates other than ATP. The ATP gamma phosphate is transferred to the NDP beta phosphate via a ping-pong mechanism, using a phosphorylated active-site intermediate.</text>
</comment>
<comment type="catalytic activity">
    <reaction evidence="1">
        <text>a 2'-deoxyribonucleoside 5'-diphosphate + ATP = a 2'-deoxyribonucleoside 5'-triphosphate + ADP</text>
        <dbReference type="Rhea" id="RHEA:44640"/>
        <dbReference type="ChEBI" id="CHEBI:30616"/>
        <dbReference type="ChEBI" id="CHEBI:61560"/>
        <dbReference type="ChEBI" id="CHEBI:73316"/>
        <dbReference type="ChEBI" id="CHEBI:456216"/>
        <dbReference type="EC" id="2.7.4.6"/>
    </reaction>
</comment>
<comment type="catalytic activity">
    <reaction evidence="1">
        <text>a ribonucleoside 5'-diphosphate + ATP = a ribonucleoside 5'-triphosphate + ADP</text>
        <dbReference type="Rhea" id="RHEA:18113"/>
        <dbReference type="ChEBI" id="CHEBI:30616"/>
        <dbReference type="ChEBI" id="CHEBI:57930"/>
        <dbReference type="ChEBI" id="CHEBI:61557"/>
        <dbReference type="ChEBI" id="CHEBI:456216"/>
        <dbReference type="EC" id="2.7.4.6"/>
    </reaction>
</comment>
<comment type="cofactor">
    <cofactor evidence="1">
        <name>Mg(2+)</name>
        <dbReference type="ChEBI" id="CHEBI:18420"/>
    </cofactor>
</comment>
<comment type="subunit">
    <text evidence="1">Homotetramer.</text>
</comment>
<comment type="subcellular location">
    <subcellularLocation>
        <location evidence="1">Cytoplasm</location>
    </subcellularLocation>
</comment>
<comment type="similarity">
    <text evidence="1">Belongs to the NDK family.</text>
</comment>
<protein>
    <recommendedName>
        <fullName evidence="1">Nucleoside diphosphate kinase</fullName>
        <shortName evidence="1">NDK</shortName>
        <shortName evidence="1">NDP kinase</shortName>
        <ecNumber evidence="1">2.7.4.6</ecNumber>
    </recommendedName>
    <alternativeName>
        <fullName evidence="1">Nucleoside-2-P kinase</fullName>
    </alternativeName>
</protein>
<name>NDK_METSB</name>
<organism>
    <name type="scientific">Methylocella silvestris (strain DSM 15510 / CIP 108128 / LMG 27833 / NCIMB 13906 / BL2)</name>
    <dbReference type="NCBI Taxonomy" id="395965"/>
    <lineage>
        <taxon>Bacteria</taxon>
        <taxon>Pseudomonadati</taxon>
        <taxon>Pseudomonadota</taxon>
        <taxon>Alphaproteobacteria</taxon>
        <taxon>Hyphomicrobiales</taxon>
        <taxon>Beijerinckiaceae</taxon>
        <taxon>Methylocella</taxon>
    </lineage>
</organism>
<feature type="chain" id="PRO_1000192273" description="Nucleoside diphosphate kinase">
    <location>
        <begin position="1"/>
        <end position="140"/>
    </location>
</feature>
<feature type="active site" description="Pros-phosphohistidine intermediate" evidence="1">
    <location>
        <position position="117"/>
    </location>
</feature>
<feature type="binding site" evidence="1">
    <location>
        <position position="11"/>
    </location>
    <ligand>
        <name>ATP</name>
        <dbReference type="ChEBI" id="CHEBI:30616"/>
    </ligand>
</feature>
<feature type="binding site" evidence="1">
    <location>
        <position position="59"/>
    </location>
    <ligand>
        <name>ATP</name>
        <dbReference type="ChEBI" id="CHEBI:30616"/>
    </ligand>
</feature>
<feature type="binding site" evidence="1">
    <location>
        <position position="87"/>
    </location>
    <ligand>
        <name>ATP</name>
        <dbReference type="ChEBI" id="CHEBI:30616"/>
    </ligand>
</feature>
<feature type="binding site" evidence="1">
    <location>
        <position position="93"/>
    </location>
    <ligand>
        <name>ATP</name>
        <dbReference type="ChEBI" id="CHEBI:30616"/>
    </ligand>
</feature>
<feature type="binding site" evidence="1">
    <location>
        <position position="104"/>
    </location>
    <ligand>
        <name>ATP</name>
        <dbReference type="ChEBI" id="CHEBI:30616"/>
    </ligand>
</feature>
<feature type="binding site" evidence="1">
    <location>
        <position position="114"/>
    </location>
    <ligand>
        <name>ATP</name>
        <dbReference type="ChEBI" id="CHEBI:30616"/>
    </ligand>
</feature>
<sequence>MAIERTFSIIKPDATRRNLTGAINALIEKAGLRIIAQKRVQITRPQAETFYAVHKERPFFGALVDTMISGPVVVQVLEGENAIKAYRDVLGATDPAKAAPGTIRKEFALSVGENSGHGSDASETAAIEIAQWFSGNEIVG</sequence>
<evidence type="ECO:0000255" key="1">
    <source>
        <dbReference type="HAMAP-Rule" id="MF_00451"/>
    </source>
</evidence>
<accession>B8EJZ0</accession>
<gene>
    <name evidence="1" type="primary">ndk</name>
    <name type="ordered locus">Msil_0968</name>
</gene>
<reference key="1">
    <citation type="journal article" date="2010" name="J. Bacteriol.">
        <title>Complete genome sequence of the aerobic facultative methanotroph Methylocella silvestris BL2.</title>
        <authorList>
            <person name="Chen Y."/>
            <person name="Crombie A."/>
            <person name="Rahman M.T."/>
            <person name="Dedysh S.N."/>
            <person name="Liesack W."/>
            <person name="Stott M.B."/>
            <person name="Alam M."/>
            <person name="Theisen A.R."/>
            <person name="Murrell J.C."/>
            <person name="Dunfield P.F."/>
        </authorList>
    </citation>
    <scope>NUCLEOTIDE SEQUENCE [LARGE SCALE GENOMIC DNA]</scope>
    <source>
        <strain>DSM 15510 / CIP 108128 / LMG 27833 / NCIMB 13906 / BL2</strain>
    </source>
</reference>
<dbReference type="EC" id="2.7.4.6" evidence="1"/>
<dbReference type="EMBL" id="CP001280">
    <property type="protein sequence ID" value="ACK49937.1"/>
    <property type="molecule type" value="Genomic_DNA"/>
</dbReference>
<dbReference type="RefSeq" id="WP_012590007.1">
    <property type="nucleotide sequence ID" value="NC_011666.1"/>
</dbReference>
<dbReference type="SMR" id="B8EJZ0"/>
<dbReference type="STRING" id="395965.Msil_0968"/>
<dbReference type="KEGG" id="msl:Msil_0968"/>
<dbReference type="eggNOG" id="COG0105">
    <property type="taxonomic scope" value="Bacteria"/>
</dbReference>
<dbReference type="HOGENOM" id="CLU_060216_8_1_5"/>
<dbReference type="OrthoDB" id="9801161at2"/>
<dbReference type="Proteomes" id="UP000002257">
    <property type="component" value="Chromosome"/>
</dbReference>
<dbReference type="GO" id="GO:0005737">
    <property type="term" value="C:cytoplasm"/>
    <property type="evidence" value="ECO:0007669"/>
    <property type="project" value="UniProtKB-SubCell"/>
</dbReference>
<dbReference type="GO" id="GO:0005524">
    <property type="term" value="F:ATP binding"/>
    <property type="evidence" value="ECO:0007669"/>
    <property type="project" value="UniProtKB-UniRule"/>
</dbReference>
<dbReference type="GO" id="GO:0046872">
    <property type="term" value="F:metal ion binding"/>
    <property type="evidence" value="ECO:0007669"/>
    <property type="project" value="UniProtKB-KW"/>
</dbReference>
<dbReference type="GO" id="GO:0004550">
    <property type="term" value="F:nucleoside diphosphate kinase activity"/>
    <property type="evidence" value="ECO:0007669"/>
    <property type="project" value="UniProtKB-UniRule"/>
</dbReference>
<dbReference type="GO" id="GO:0006241">
    <property type="term" value="P:CTP biosynthetic process"/>
    <property type="evidence" value="ECO:0007669"/>
    <property type="project" value="UniProtKB-UniRule"/>
</dbReference>
<dbReference type="GO" id="GO:0006183">
    <property type="term" value="P:GTP biosynthetic process"/>
    <property type="evidence" value="ECO:0007669"/>
    <property type="project" value="UniProtKB-UniRule"/>
</dbReference>
<dbReference type="GO" id="GO:0006228">
    <property type="term" value="P:UTP biosynthetic process"/>
    <property type="evidence" value="ECO:0007669"/>
    <property type="project" value="UniProtKB-UniRule"/>
</dbReference>
<dbReference type="CDD" id="cd04413">
    <property type="entry name" value="NDPk_I"/>
    <property type="match status" value="1"/>
</dbReference>
<dbReference type="FunFam" id="3.30.70.141:FF:000017">
    <property type="entry name" value="Nucleoside diphosphate kinase"/>
    <property type="match status" value="1"/>
</dbReference>
<dbReference type="Gene3D" id="3.30.70.141">
    <property type="entry name" value="Nucleoside diphosphate kinase-like domain"/>
    <property type="match status" value="1"/>
</dbReference>
<dbReference type="HAMAP" id="MF_00451">
    <property type="entry name" value="NDP_kinase"/>
    <property type="match status" value="1"/>
</dbReference>
<dbReference type="InterPro" id="IPR034907">
    <property type="entry name" value="NDK-like_dom"/>
</dbReference>
<dbReference type="InterPro" id="IPR036850">
    <property type="entry name" value="NDK-like_dom_sf"/>
</dbReference>
<dbReference type="InterPro" id="IPR001564">
    <property type="entry name" value="Nucleoside_diP_kinase"/>
</dbReference>
<dbReference type="NCBIfam" id="NF001908">
    <property type="entry name" value="PRK00668.1"/>
    <property type="match status" value="1"/>
</dbReference>
<dbReference type="PANTHER" id="PTHR46161">
    <property type="entry name" value="NUCLEOSIDE DIPHOSPHATE KINASE"/>
    <property type="match status" value="1"/>
</dbReference>
<dbReference type="PANTHER" id="PTHR46161:SF3">
    <property type="entry name" value="NUCLEOSIDE DIPHOSPHATE KINASE DDB_G0292928-RELATED"/>
    <property type="match status" value="1"/>
</dbReference>
<dbReference type="Pfam" id="PF00334">
    <property type="entry name" value="NDK"/>
    <property type="match status" value="1"/>
</dbReference>
<dbReference type="PRINTS" id="PR01243">
    <property type="entry name" value="NUCDPKINASE"/>
</dbReference>
<dbReference type="SMART" id="SM00562">
    <property type="entry name" value="NDK"/>
    <property type="match status" value="1"/>
</dbReference>
<dbReference type="SUPFAM" id="SSF54919">
    <property type="entry name" value="Nucleoside diphosphate kinase, NDK"/>
    <property type="match status" value="1"/>
</dbReference>
<dbReference type="PROSITE" id="PS51374">
    <property type="entry name" value="NDPK_LIKE"/>
    <property type="match status" value="1"/>
</dbReference>